<comment type="subcellular location">
    <subcellularLocation>
        <location evidence="1">Cytoplasm</location>
    </subcellularLocation>
</comment>
<comment type="similarity">
    <text evidence="1">Belongs to the TACO1 family. YeeN subfamily.</text>
</comment>
<gene>
    <name evidence="1" type="primary">yeeN</name>
    <name type="ordered locus">Z3140</name>
    <name type="ordered locus">ECs2780</name>
</gene>
<organism>
    <name type="scientific">Escherichia coli O157:H7</name>
    <dbReference type="NCBI Taxonomy" id="83334"/>
    <lineage>
        <taxon>Bacteria</taxon>
        <taxon>Pseudomonadati</taxon>
        <taxon>Pseudomonadota</taxon>
        <taxon>Gammaproteobacteria</taxon>
        <taxon>Enterobacterales</taxon>
        <taxon>Enterobacteriaceae</taxon>
        <taxon>Escherichia</taxon>
    </lineage>
</organism>
<evidence type="ECO:0000255" key="1">
    <source>
        <dbReference type="HAMAP-Rule" id="MF_00918"/>
    </source>
</evidence>
<sequence length="238" mass="25839">MGRKWANIVAKKTAKDGATSKIYAKFGVEIYAAAKQGEPDPELNTSLKFVIERAKQAQVPKHVIDKAIDKAKGGGDETFVQGRYEGFGPNGSMIIAETLTSNVNRTIANVRTIFNKKGGNIGAAGSVSYMFDNTGVIVFKGSDPDHIFEILLEAEVDVRDVTEEEGNIVIYTEPTDLHKGIAALKAAGISEFSTTELEMIAQSEVELSPEDLEIFEGLVDALEDDDDVQKVYHNVANL</sequence>
<reference key="1">
    <citation type="journal article" date="2001" name="Nature">
        <title>Genome sequence of enterohaemorrhagic Escherichia coli O157:H7.</title>
        <authorList>
            <person name="Perna N.T."/>
            <person name="Plunkett G. III"/>
            <person name="Burland V."/>
            <person name="Mau B."/>
            <person name="Glasner J.D."/>
            <person name="Rose D.J."/>
            <person name="Mayhew G.F."/>
            <person name="Evans P.S."/>
            <person name="Gregor J."/>
            <person name="Kirkpatrick H.A."/>
            <person name="Posfai G."/>
            <person name="Hackett J."/>
            <person name="Klink S."/>
            <person name="Boutin A."/>
            <person name="Shao Y."/>
            <person name="Miller L."/>
            <person name="Grotbeck E.J."/>
            <person name="Davis N.W."/>
            <person name="Lim A."/>
            <person name="Dimalanta E.T."/>
            <person name="Potamousis K."/>
            <person name="Apodaca J."/>
            <person name="Anantharaman T.S."/>
            <person name="Lin J."/>
            <person name="Yen G."/>
            <person name="Schwartz D.C."/>
            <person name="Welch R.A."/>
            <person name="Blattner F.R."/>
        </authorList>
    </citation>
    <scope>NUCLEOTIDE SEQUENCE [LARGE SCALE GENOMIC DNA]</scope>
    <source>
        <strain>O157:H7 / EDL933 / ATCC 700927 / EHEC</strain>
    </source>
</reference>
<reference key="2">
    <citation type="journal article" date="2001" name="DNA Res.">
        <title>Complete genome sequence of enterohemorrhagic Escherichia coli O157:H7 and genomic comparison with a laboratory strain K-12.</title>
        <authorList>
            <person name="Hayashi T."/>
            <person name="Makino K."/>
            <person name="Ohnishi M."/>
            <person name="Kurokawa K."/>
            <person name="Ishii K."/>
            <person name="Yokoyama K."/>
            <person name="Han C.-G."/>
            <person name="Ohtsubo E."/>
            <person name="Nakayama K."/>
            <person name="Murata T."/>
            <person name="Tanaka M."/>
            <person name="Tobe T."/>
            <person name="Iida T."/>
            <person name="Takami H."/>
            <person name="Honda T."/>
            <person name="Sasakawa C."/>
            <person name="Ogasawara N."/>
            <person name="Yasunaga T."/>
            <person name="Kuhara S."/>
            <person name="Shiba T."/>
            <person name="Hattori M."/>
            <person name="Shinagawa H."/>
        </authorList>
    </citation>
    <scope>NUCLEOTIDE SEQUENCE [LARGE SCALE GENOMIC DNA]</scope>
    <source>
        <strain>O157:H7 / Sakai / RIMD 0509952 / EHEC</strain>
    </source>
</reference>
<name>YEEN_ECO57</name>
<feature type="chain" id="PRO_0000175805" description="Probable transcriptional regulatory protein YeeN">
    <location>
        <begin position="1"/>
        <end position="238"/>
    </location>
</feature>
<accession>Q8X8V5</accession>
<protein>
    <recommendedName>
        <fullName evidence="1">Probable transcriptional regulatory protein YeeN</fullName>
    </recommendedName>
</protein>
<proteinExistence type="inferred from homology"/>
<keyword id="KW-0963">Cytoplasm</keyword>
<keyword id="KW-0238">DNA-binding</keyword>
<keyword id="KW-1185">Reference proteome</keyword>
<keyword id="KW-0804">Transcription</keyword>
<keyword id="KW-0805">Transcription regulation</keyword>
<dbReference type="EMBL" id="AE005174">
    <property type="protein sequence ID" value="AAG57046.1"/>
    <property type="molecule type" value="Genomic_DNA"/>
</dbReference>
<dbReference type="EMBL" id="BA000007">
    <property type="protein sequence ID" value="BAB36203.1"/>
    <property type="molecule type" value="Genomic_DNA"/>
</dbReference>
<dbReference type="PIR" id="B85823">
    <property type="entry name" value="B85823"/>
</dbReference>
<dbReference type="PIR" id="D90976">
    <property type="entry name" value="D90976"/>
</dbReference>
<dbReference type="RefSeq" id="NP_310807.1">
    <property type="nucleotide sequence ID" value="NC_002695.1"/>
</dbReference>
<dbReference type="RefSeq" id="WP_000532909.1">
    <property type="nucleotide sequence ID" value="NZ_VOAI01000052.1"/>
</dbReference>
<dbReference type="SMR" id="Q8X8V5"/>
<dbReference type="STRING" id="155864.Z3140"/>
<dbReference type="GeneID" id="912408"/>
<dbReference type="KEGG" id="ece:Z3140"/>
<dbReference type="KEGG" id="ecs:ECs_2780"/>
<dbReference type="PATRIC" id="fig|386585.9.peg.2912"/>
<dbReference type="eggNOG" id="COG0217">
    <property type="taxonomic scope" value="Bacteria"/>
</dbReference>
<dbReference type="HOGENOM" id="CLU_062974_2_0_6"/>
<dbReference type="OMA" id="FGPGGCM"/>
<dbReference type="Proteomes" id="UP000000558">
    <property type="component" value="Chromosome"/>
</dbReference>
<dbReference type="Proteomes" id="UP000002519">
    <property type="component" value="Chromosome"/>
</dbReference>
<dbReference type="GO" id="GO:0005829">
    <property type="term" value="C:cytosol"/>
    <property type="evidence" value="ECO:0007669"/>
    <property type="project" value="TreeGrafter"/>
</dbReference>
<dbReference type="GO" id="GO:0003677">
    <property type="term" value="F:DNA binding"/>
    <property type="evidence" value="ECO:0007669"/>
    <property type="project" value="UniProtKB-UniRule"/>
</dbReference>
<dbReference type="GO" id="GO:0006355">
    <property type="term" value="P:regulation of DNA-templated transcription"/>
    <property type="evidence" value="ECO:0007669"/>
    <property type="project" value="UniProtKB-UniRule"/>
</dbReference>
<dbReference type="FunFam" id="1.10.10.200:FF:000003">
    <property type="entry name" value="Probable transcriptional regulatory protein YeeN"/>
    <property type="match status" value="1"/>
</dbReference>
<dbReference type="FunFam" id="3.30.70.980:FF:000004">
    <property type="entry name" value="Probable transcriptional regulatory protein YeeN"/>
    <property type="match status" value="1"/>
</dbReference>
<dbReference type="Gene3D" id="1.10.10.200">
    <property type="match status" value="1"/>
</dbReference>
<dbReference type="Gene3D" id="3.30.70.980">
    <property type="match status" value="2"/>
</dbReference>
<dbReference type="HAMAP" id="MF_00693">
    <property type="entry name" value="Transcrip_reg_TACO1"/>
    <property type="match status" value="1"/>
</dbReference>
<dbReference type="HAMAP" id="MF_00918">
    <property type="entry name" value="Transcrip_reg_TACO1_YeeN"/>
    <property type="match status" value="1"/>
</dbReference>
<dbReference type="InterPro" id="IPR017856">
    <property type="entry name" value="Integrase-like_N"/>
</dbReference>
<dbReference type="InterPro" id="IPR048300">
    <property type="entry name" value="TACO1_YebC-like_2nd/3rd_dom"/>
</dbReference>
<dbReference type="InterPro" id="IPR049083">
    <property type="entry name" value="TACO1_YebC_N"/>
</dbReference>
<dbReference type="InterPro" id="IPR002876">
    <property type="entry name" value="Transcrip_reg_TACO1-like"/>
</dbReference>
<dbReference type="InterPro" id="IPR026564">
    <property type="entry name" value="Transcrip_reg_TACO1-like_dom3"/>
</dbReference>
<dbReference type="InterPro" id="IPR026562">
    <property type="entry name" value="Transcrip_reg_TACO1_YeeN"/>
</dbReference>
<dbReference type="InterPro" id="IPR029072">
    <property type="entry name" value="YebC-like"/>
</dbReference>
<dbReference type="NCBIfam" id="NF009044">
    <property type="entry name" value="PRK12378.1"/>
    <property type="match status" value="1"/>
</dbReference>
<dbReference type="NCBIfam" id="TIGR01033">
    <property type="entry name" value="YebC/PmpR family DNA-binding transcriptional regulator"/>
    <property type="match status" value="1"/>
</dbReference>
<dbReference type="PANTHER" id="PTHR12532">
    <property type="entry name" value="TRANSLATIONAL ACTIVATOR OF CYTOCHROME C OXIDASE 1"/>
    <property type="match status" value="1"/>
</dbReference>
<dbReference type="PANTHER" id="PTHR12532:SF0">
    <property type="entry name" value="TRANSLATIONAL ACTIVATOR OF CYTOCHROME C OXIDASE 1"/>
    <property type="match status" value="1"/>
</dbReference>
<dbReference type="Pfam" id="PF20772">
    <property type="entry name" value="TACO1_YebC_N"/>
    <property type="match status" value="1"/>
</dbReference>
<dbReference type="Pfam" id="PF01709">
    <property type="entry name" value="Transcrip_reg"/>
    <property type="match status" value="1"/>
</dbReference>
<dbReference type="SUPFAM" id="SSF75625">
    <property type="entry name" value="YebC-like"/>
    <property type="match status" value="1"/>
</dbReference>